<accession>Q20806</accession>
<organism>
    <name type="scientific">Caenorhabditis elegans</name>
    <dbReference type="NCBI Taxonomy" id="6239"/>
    <lineage>
        <taxon>Eukaryota</taxon>
        <taxon>Metazoa</taxon>
        <taxon>Ecdysozoa</taxon>
        <taxon>Nematoda</taxon>
        <taxon>Chromadorea</taxon>
        <taxon>Rhabditida</taxon>
        <taxon>Rhabditina</taxon>
        <taxon>Rhabditomorpha</taxon>
        <taxon>Rhabditoidea</taxon>
        <taxon>Rhabditidae</taxon>
        <taxon>Peloderinae</taxon>
        <taxon>Caenorhabditis</taxon>
    </lineage>
</organism>
<gene>
    <name type="ORF">F55C10.4</name>
</gene>
<proteinExistence type="inferred from homology"/>
<keyword id="KW-0328">Glycosyltransferase</keyword>
<keyword id="KW-0472">Membrane</keyword>
<keyword id="KW-1185">Reference proteome</keyword>
<keyword id="KW-0808">Transferase</keyword>
<keyword id="KW-0812">Transmembrane</keyword>
<keyword id="KW-1133">Transmembrane helix</keyword>
<dbReference type="EC" id="2.4.1.-" evidence="2"/>
<dbReference type="EMBL" id="Z74036">
    <property type="protein sequence ID" value="CAA98488.1"/>
    <property type="molecule type" value="Genomic_DNA"/>
</dbReference>
<dbReference type="PIR" id="T22707">
    <property type="entry name" value="T22707"/>
</dbReference>
<dbReference type="RefSeq" id="NP_505887.1">
    <property type="nucleotide sequence ID" value="NM_073486.5"/>
</dbReference>
<dbReference type="BioGRID" id="44599">
    <property type="interactions" value="1"/>
</dbReference>
<dbReference type="FunCoup" id="Q20806">
    <property type="interactions" value="10"/>
</dbReference>
<dbReference type="IntAct" id="Q20806">
    <property type="interactions" value="1"/>
</dbReference>
<dbReference type="PaxDb" id="6239-F55C10.4"/>
<dbReference type="EnsemblMetazoa" id="F55C10.4.1">
    <property type="protein sequence ID" value="F55C10.4.1"/>
    <property type="gene ID" value="WBGene00010108"/>
</dbReference>
<dbReference type="GeneID" id="179573"/>
<dbReference type="KEGG" id="cel:CELE_F55C10.4"/>
<dbReference type="UCSC" id="F55C10.4">
    <property type="organism name" value="c. elegans"/>
</dbReference>
<dbReference type="AGR" id="WB:WBGene00010108"/>
<dbReference type="CTD" id="179573"/>
<dbReference type="WormBase" id="F55C10.4">
    <property type="protein sequence ID" value="CE11184"/>
    <property type="gene ID" value="WBGene00010108"/>
</dbReference>
<dbReference type="eggNOG" id="KOG4735">
    <property type="taxonomic scope" value="Eukaryota"/>
</dbReference>
<dbReference type="GeneTree" id="ENSGT00970000195836"/>
<dbReference type="HOGENOM" id="CLU_028496_0_0_1"/>
<dbReference type="InParanoid" id="Q20806"/>
<dbReference type="OMA" id="TWSHWSR"/>
<dbReference type="OrthoDB" id="5777994at2759"/>
<dbReference type="PhylomeDB" id="Q20806"/>
<dbReference type="PRO" id="PR:Q20806"/>
<dbReference type="Proteomes" id="UP000001940">
    <property type="component" value="Chromosome V"/>
</dbReference>
<dbReference type="Bgee" id="WBGene00010108">
    <property type="expression patterns" value="Expressed in larva"/>
</dbReference>
<dbReference type="GO" id="GO:0016020">
    <property type="term" value="C:membrane"/>
    <property type="evidence" value="ECO:0007669"/>
    <property type="project" value="UniProtKB-SubCell"/>
</dbReference>
<dbReference type="GO" id="GO:0016757">
    <property type="term" value="F:glycosyltransferase activity"/>
    <property type="evidence" value="ECO:0007669"/>
    <property type="project" value="UniProtKB-KW"/>
</dbReference>
<dbReference type="InterPro" id="IPR008166">
    <property type="entry name" value="Glyco_transf_92"/>
</dbReference>
<dbReference type="InterPro" id="IPR052012">
    <property type="entry name" value="GTase_92"/>
</dbReference>
<dbReference type="PANTHER" id="PTHR21645">
    <property type="entry name" value="GLYCOSYLTRANSFERASE FAMILY 92 PROTEIN"/>
    <property type="match status" value="1"/>
</dbReference>
<dbReference type="PANTHER" id="PTHR21645:SF15">
    <property type="entry name" value="GLYCOSYLTRANSFERASE FAMILY 92 PROTEIN F55C10.4"/>
    <property type="match status" value="1"/>
</dbReference>
<dbReference type="Pfam" id="PF01697">
    <property type="entry name" value="Glyco_transf_92"/>
    <property type="match status" value="1"/>
</dbReference>
<feature type="chain" id="PRO_0000065370" description="Glycosyltransferase family 92 protein F55C10.4">
    <location>
        <begin position="1"/>
        <end position="517"/>
    </location>
</feature>
<feature type="transmembrane region" description="Helical" evidence="1">
    <location>
        <begin position="9"/>
        <end position="31"/>
    </location>
</feature>
<feature type="domain" description="GT92">
    <location>
        <begin position="156"/>
        <end position="454"/>
    </location>
</feature>
<sequence length="517" mass="60108">MIPRLPRYFLKYFIIFTFFCVTFCFLKLCLGENGVEKKNHKTIEAYQYTHTFIHSAYYYPKSKSLGENAVVLVTTMNKRTMWKILDYKINMIGTNQSTHHTTRASLSTEHRIIERCDYMLIIAQTNSIDNMDKLEIEAEGVLVEIPYKKPIYIAPKPVIFCVSPQFAAEQWQTFLVQLHVSKRYGAHLQLYIVSMVESYFNLISEYEKMGLVSIEPWLTIKFSSTDGPYLEPNRNVELRNQAGAHTDCLLKYKESASFIGSLDMDDILIPNNANSYYEEFEREYAGSQFISALHYDKYDYKTIKVSELRSQSLSAIVKNAERLSTKDTGKSFVRPERFNSTWSHWSRAAQKKPIYLDGYEKPILRELKTISNNGMFHLKNMYLTEFNDLGIGQIPLNPTDNVTQLIEREHLAEIDADMKRMLSMPSISKLADSLPKEEFYMPIIFKCYNESFYHLRDTNQMRPDILCVNAYSCDLPQQVGNRCVHSDATYHSGPPMWPISFHFATNSFFSRDIGCYQ</sequence>
<name>YXWL_CAEEL</name>
<protein>
    <recommendedName>
        <fullName>Glycosyltransferase family 92 protein F55C10.4</fullName>
        <ecNumber evidence="2">2.4.1.-</ecNumber>
    </recommendedName>
</protein>
<reference key="1">
    <citation type="journal article" date="1998" name="Science">
        <title>Genome sequence of the nematode C. elegans: a platform for investigating biology.</title>
        <authorList>
            <consortium name="The C. elegans sequencing consortium"/>
        </authorList>
    </citation>
    <scope>NUCLEOTIDE SEQUENCE [LARGE SCALE GENOMIC DNA]</scope>
    <source>
        <strain>Bristol N2</strain>
    </source>
</reference>
<comment type="subcellular location">
    <subcellularLocation>
        <location evidence="2">Membrane</location>
        <topology evidence="2">Single-pass membrane protein</topology>
    </subcellularLocation>
</comment>
<comment type="similarity">
    <text evidence="2">Belongs to the glycosyltransferase 92 family.</text>
</comment>
<evidence type="ECO:0000255" key="1"/>
<evidence type="ECO:0000305" key="2"/>